<name>RL6_GEMAT</name>
<organism>
    <name type="scientific">Gemmatimonas aurantiaca (strain DSM 14586 / JCM 11422 / NBRC 100505 / T-27)</name>
    <dbReference type="NCBI Taxonomy" id="379066"/>
    <lineage>
        <taxon>Bacteria</taxon>
        <taxon>Pseudomonadati</taxon>
        <taxon>Gemmatimonadota</taxon>
        <taxon>Gemmatimonadia</taxon>
        <taxon>Gemmatimonadales</taxon>
        <taxon>Gemmatimonadaceae</taxon>
        <taxon>Gemmatimonas</taxon>
    </lineage>
</organism>
<sequence>MSRIGKRPIPVPAGVTVAIDGSAVTVKGPKGELSRVLPADIVVSQEGAELLVKRPSDEERHKALHGLTRTLVANMVEGVTTGFKRVLEITGVGYKAEIKPYGALLSLGFSHQIEYKAPQGVQITAPNPTTVVIEGASKEHVGQVAAEIRSLRKPEPYKGKGVKYQGEVVRRKAGKAGGK</sequence>
<feature type="chain" id="PRO_1000214927" description="Large ribosomal subunit protein uL6">
    <location>
        <begin position="1"/>
        <end position="179"/>
    </location>
</feature>
<accession>C1A6S0</accession>
<keyword id="KW-1185">Reference proteome</keyword>
<keyword id="KW-0687">Ribonucleoprotein</keyword>
<keyword id="KW-0689">Ribosomal protein</keyword>
<keyword id="KW-0694">RNA-binding</keyword>
<keyword id="KW-0699">rRNA-binding</keyword>
<dbReference type="EMBL" id="AP009153">
    <property type="protein sequence ID" value="BAH37930.1"/>
    <property type="molecule type" value="Genomic_DNA"/>
</dbReference>
<dbReference type="RefSeq" id="WP_012682377.1">
    <property type="nucleotide sequence ID" value="NC_012489.1"/>
</dbReference>
<dbReference type="SMR" id="C1A6S0"/>
<dbReference type="STRING" id="379066.GAU_0888"/>
<dbReference type="KEGG" id="gau:GAU_0888"/>
<dbReference type="eggNOG" id="COG0097">
    <property type="taxonomic scope" value="Bacteria"/>
</dbReference>
<dbReference type="HOGENOM" id="CLU_065464_1_2_0"/>
<dbReference type="OrthoDB" id="9805007at2"/>
<dbReference type="Proteomes" id="UP000002209">
    <property type="component" value="Chromosome"/>
</dbReference>
<dbReference type="GO" id="GO:0022625">
    <property type="term" value="C:cytosolic large ribosomal subunit"/>
    <property type="evidence" value="ECO:0007669"/>
    <property type="project" value="TreeGrafter"/>
</dbReference>
<dbReference type="GO" id="GO:0019843">
    <property type="term" value="F:rRNA binding"/>
    <property type="evidence" value="ECO:0007669"/>
    <property type="project" value="UniProtKB-UniRule"/>
</dbReference>
<dbReference type="GO" id="GO:0003735">
    <property type="term" value="F:structural constituent of ribosome"/>
    <property type="evidence" value="ECO:0007669"/>
    <property type="project" value="InterPro"/>
</dbReference>
<dbReference type="GO" id="GO:0002181">
    <property type="term" value="P:cytoplasmic translation"/>
    <property type="evidence" value="ECO:0007669"/>
    <property type="project" value="TreeGrafter"/>
</dbReference>
<dbReference type="FunFam" id="3.90.930.12:FF:000001">
    <property type="entry name" value="50S ribosomal protein L6"/>
    <property type="match status" value="1"/>
</dbReference>
<dbReference type="FunFam" id="3.90.930.12:FF:000002">
    <property type="entry name" value="50S ribosomal protein L6"/>
    <property type="match status" value="1"/>
</dbReference>
<dbReference type="Gene3D" id="3.90.930.12">
    <property type="entry name" value="Ribosomal protein L6, alpha-beta domain"/>
    <property type="match status" value="2"/>
</dbReference>
<dbReference type="HAMAP" id="MF_01365_B">
    <property type="entry name" value="Ribosomal_uL6_B"/>
    <property type="match status" value="1"/>
</dbReference>
<dbReference type="InterPro" id="IPR000702">
    <property type="entry name" value="Ribosomal_uL6-like"/>
</dbReference>
<dbReference type="InterPro" id="IPR036789">
    <property type="entry name" value="Ribosomal_uL6-like_a/b-dom_sf"/>
</dbReference>
<dbReference type="InterPro" id="IPR020040">
    <property type="entry name" value="Ribosomal_uL6_a/b-dom"/>
</dbReference>
<dbReference type="InterPro" id="IPR019906">
    <property type="entry name" value="Ribosomal_uL6_bac-type"/>
</dbReference>
<dbReference type="InterPro" id="IPR002358">
    <property type="entry name" value="Ribosomal_uL6_CS"/>
</dbReference>
<dbReference type="NCBIfam" id="TIGR03654">
    <property type="entry name" value="L6_bact"/>
    <property type="match status" value="1"/>
</dbReference>
<dbReference type="PANTHER" id="PTHR11655">
    <property type="entry name" value="60S/50S RIBOSOMAL PROTEIN L6/L9"/>
    <property type="match status" value="1"/>
</dbReference>
<dbReference type="PANTHER" id="PTHR11655:SF14">
    <property type="entry name" value="LARGE RIBOSOMAL SUBUNIT PROTEIN UL6M"/>
    <property type="match status" value="1"/>
</dbReference>
<dbReference type="Pfam" id="PF00347">
    <property type="entry name" value="Ribosomal_L6"/>
    <property type="match status" value="2"/>
</dbReference>
<dbReference type="PIRSF" id="PIRSF002162">
    <property type="entry name" value="Ribosomal_L6"/>
    <property type="match status" value="1"/>
</dbReference>
<dbReference type="PRINTS" id="PR00059">
    <property type="entry name" value="RIBOSOMALL6"/>
</dbReference>
<dbReference type="SUPFAM" id="SSF56053">
    <property type="entry name" value="Ribosomal protein L6"/>
    <property type="match status" value="2"/>
</dbReference>
<dbReference type="PROSITE" id="PS00525">
    <property type="entry name" value="RIBOSOMAL_L6_1"/>
    <property type="match status" value="1"/>
</dbReference>
<reference key="1">
    <citation type="submission" date="2006-03" db="EMBL/GenBank/DDBJ databases">
        <title>Complete genome sequence of Gemmatimonas aurantiaca T-27 that represents a novel phylum Gemmatimonadetes.</title>
        <authorList>
            <person name="Takasaki K."/>
            <person name="Ichikawa N."/>
            <person name="Miura H."/>
            <person name="Matsushita S."/>
            <person name="Watanabe Y."/>
            <person name="Oguchi A."/>
            <person name="Ankai A."/>
            <person name="Yashiro I."/>
            <person name="Takahashi M."/>
            <person name="Terui Y."/>
            <person name="Fukui S."/>
            <person name="Yokoyama H."/>
            <person name="Tanikawa S."/>
            <person name="Hanada S."/>
            <person name="Kamagata Y."/>
            <person name="Fujita N."/>
        </authorList>
    </citation>
    <scope>NUCLEOTIDE SEQUENCE [LARGE SCALE GENOMIC DNA]</scope>
    <source>
        <strain>DSM 14586 / JCM 11422 / NBRC 100505 / T-27</strain>
    </source>
</reference>
<protein>
    <recommendedName>
        <fullName evidence="1">Large ribosomal subunit protein uL6</fullName>
    </recommendedName>
    <alternativeName>
        <fullName evidence="2">50S ribosomal protein L6</fullName>
    </alternativeName>
</protein>
<gene>
    <name evidence="1" type="primary">rplF</name>
    <name type="ordered locus">GAU_0888</name>
</gene>
<proteinExistence type="inferred from homology"/>
<evidence type="ECO:0000255" key="1">
    <source>
        <dbReference type="HAMAP-Rule" id="MF_01365"/>
    </source>
</evidence>
<evidence type="ECO:0000305" key="2"/>
<comment type="function">
    <text evidence="1">This protein binds to the 23S rRNA, and is important in its secondary structure. It is located near the subunit interface in the base of the L7/L12 stalk, and near the tRNA binding site of the peptidyltransferase center.</text>
</comment>
<comment type="subunit">
    <text evidence="1">Part of the 50S ribosomal subunit.</text>
</comment>
<comment type="similarity">
    <text evidence="1">Belongs to the universal ribosomal protein uL6 family.</text>
</comment>